<accession>Q31UY8</accession>
<organism>
    <name type="scientific">Shigella boydii serotype 4 (strain Sb227)</name>
    <dbReference type="NCBI Taxonomy" id="300268"/>
    <lineage>
        <taxon>Bacteria</taxon>
        <taxon>Pseudomonadati</taxon>
        <taxon>Pseudomonadota</taxon>
        <taxon>Gammaproteobacteria</taxon>
        <taxon>Enterobacterales</taxon>
        <taxon>Enterobacteriaceae</taxon>
        <taxon>Shigella</taxon>
    </lineage>
</organism>
<reference key="1">
    <citation type="journal article" date="2005" name="Nucleic Acids Res.">
        <title>Genome dynamics and diversity of Shigella species, the etiologic agents of bacillary dysentery.</title>
        <authorList>
            <person name="Yang F."/>
            <person name="Yang J."/>
            <person name="Zhang X."/>
            <person name="Chen L."/>
            <person name="Jiang Y."/>
            <person name="Yan Y."/>
            <person name="Tang X."/>
            <person name="Wang J."/>
            <person name="Xiong Z."/>
            <person name="Dong J."/>
            <person name="Xue Y."/>
            <person name="Zhu Y."/>
            <person name="Xu X."/>
            <person name="Sun L."/>
            <person name="Chen S."/>
            <person name="Nie H."/>
            <person name="Peng J."/>
            <person name="Xu J."/>
            <person name="Wang Y."/>
            <person name="Yuan Z."/>
            <person name="Wen Y."/>
            <person name="Yao Z."/>
            <person name="Shen Y."/>
            <person name="Qiang B."/>
            <person name="Hou Y."/>
            <person name="Yu J."/>
            <person name="Jin Q."/>
        </authorList>
    </citation>
    <scope>NUCLEOTIDE SEQUENCE [LARGE SCALE GENOMIC DNA]</scope>
    <source>
        <strain>Sb227</strain>
    </source>
</reference>
<sequence>MKNNSQLLMPREKMLKFGISALTDVELLALFLRTGTRGKDVLTLAKEMLENFGSLYGLLTSEYEQFSGVHGIGVAKFAQLKGIAELARRYYNVRMREESPLLSPEMTREFLQSQLTGEEREIFMVIFLDSQHRVITHSRLFSGTLNHVEVHPREIIREAIKINASALILAHNHPSGCAEPSKADKLITERIIKSCQFMDLRVLDHIVIGRGEYVSFAERGWI</sequence>
<name>YICR_SHIBS</name>
<protein>
    <recommendedName>
        <fullName evidence="1">UPF0758 protein YicR</fullName>
    </recommendedName>
</protein>
<dbReference type="EMBL" id="CP000036">
    <property type="protein sequence ID" value="ABB68120.1"/>
    <property type="status" value="ALT_INIT"/>
    <property type="molecule type" value="Genomic_DNA"/>
</dbReference>
<dbReference type="SMR" id="Q31UY8"/>
<dbReference type="KEGG" id="sbo:SBO_3640"/>
<dbReference type="HOGENOM" id="CLU_073529_0_2_6"/>
<dbReference type="Proteomes" id="UP000007067">
    <property type="component" value="Chromosome"/>
</dbReference>
<dbReference type="GO" id="GO:0046872">
    <property type="term" value="F:metal ion binding"/>
    <property type="evidence" value="ECO:0007669"/>
    <property type="project" value="UniProtKB-KW"/>
</dbReference>
<dbReference type="GO" id="GO:0008237">
    <property type="term" value="F:metallopeptidase activity"/>
    <property type="evidence" value="ECO:0007669"/>
    <property type="project" value="UniProtKB-KW"/>
</dbReference>
<dbReference type="GO" id="GO:0006508">
    <property type="term" value="P:proteolysis"/>
    <property type="evidence" value="ECO:0007669"/>
    <property type="project" value="UniProtKB-KW"/>
</dbReference>
<dbReference type="CDD" id="cd08071">
    <property type="entry name" value="MPN_DUF2466"/>
    <property type="match status" value="1"/>
</dbReference>
<dbReference type="Gene3D" id="3.40.140.10">
    <property type="entry name" value="Cytidine Deaminase, domain 2"/>
    <property type="match status" value="1"/>
</dbReference>
<dbReference type="HAMAP" id="MF_00018">
    <property type="entry name" value="UPF0758_YicR"/>
    <property type="match status" value="1"/>
</dbReference>
<dbReference type="InterPro" id="IPR037518">
    <property type="entry name" value="MPN"/>
</dbReference>
<dbReference type="InterPro" id="IPR025657">
    <property type="entry name" value="RadC_JAB"/>
</dbReference>
<dbReference type="InterPro" id="IPR010994">
    <property type="entry name" value="RuvA_2-like"/>
</dbReference>
<dbReference type="InterPro" id="IPR001405">
    <property type="entry name" value="UPF0758"/>
</dbReference>
<dbReference type="InterPro" id="IPR020891">
    <property type="entry name" value="UPF0758_CS"/>
</dbReference>
<dbReference type="InterPro" id="IPR046778">
    <property type="entry name" value="UPF0758_N"/>
</dbReference>
<dbReference type="InterPro" id="IPR022820">
    <property type="entry name" value="UPF0758_YicR"/>
</dbReference>
<dbReference type="NCBIfam" id="NF000642">
    <property type="entry name" value="PRK00024.1"/>
    <property type="match status" value="1"/>
</dbReference>
<dbReference type="NCBIfam" id="TIGR00608">
    <property type="entry name" value="radc"/>
    <property type="match status" value="1"/>
</dbReference>
<dbReference type="PANTHER" id="PTHR30471">
    <property type="entry name" value="DNA REPAIR PROTEIN RADC"/>
    <property type="match status" value="1"/>
</dbReference>
<dbReference type="PANTHER" id="PTHR30471:SF3">
    <property type="entry name" value="UPF0758 PROTEIN YEES-RELATED"/>
    <property type="match status" value="1"/>
</dbReference>
<dbReference type="Pfam" id="PF04002">
    <property type="entry name" value="RadC"/>
    <property type="match status" value="1"/>
</dbReference>
<dbReference type="Pfam" id="PF20582">
    <property type="entry name" value="UPF0758_N"/>
    <property type="match status" value="1"/>
</dbReference>
<dbReference type="SUPFAM" id="SSF47781">
    <property type="entry name" value="RuvA domain 2-like"/>
    <property type="match status" value="1"/>
</dbReference>
<dbReference type="PROSITE" id="PS50249">
    <property type="entry name" value="MPN"/>
    <property type="match status" value="1"/>
</dbReference>
<dbReference type="PROSITE" id="PS01302">
    <property type="entry name" value="UPF0758"/>
    <property type="match status" value="1"/>
</dbReference>
<comment type="similarity">
    <text evidence="1">Belongs to the UPF0758 family. YicR subfamily.</text>
</comment>
<comment type="sequence caution" evidence="3">
    <conflict type="erroneous initiation">
        <sequence resource="EMBL-CDS" id="ABB68120"/>
    </conflict>
</comment>
<evidence type="ECO:0000255" key="1">
    <source>
        <dbReference type="HAMAP-Rule" id="MF_00018"/>
    </source>
</evidence>
<evidence type="ECO:0000255" key="2">
    <source>
        <dbReference type="PROSITE-ProRule" id="PRU01182"/>
    </source>
</evidence>
<evidence type="ECO:0000305" key="3"/>
<proteinExistence type="inferred from homology"/>
<gene>
    <name evidence="1" type="primary">yicR</name>
    <name type="ordered locus">SBO_3640</name>
</gene>
<feature type="chain" id="PRO_0000322703" description="UPF0758 protein YicR">
    <location>
        <begin position="1"/>
        <end position="222"/>
    </location>
</feature>
<feature type="domain" description="MPN" evidence="2">
    <location>
        <begin position="100"/>
        <end position="222"/>
    </location>
</feature>
<feature type="short sequence motif" description="JAMM motif" evidence="2">
    <location>
        <begin position="171"/>
        <end position="184"/>
    </location>
</feature>
<feature type="binding site" evidence="2">
    <location>
        <position position="171"/>
    </location>
    <ligand>
        <name>Zn(2+)</name>
        <dbReference type="ChEBI" id="CHEBI:29105"/>
        <note>catalytic</note>
    </ligand>
</feature>
<feature type="binding site" evidence="2">
    <location>
        <position position="173"/>
    </location>
    <ligand>
        <name>Zn(2+)</name>
        <dbReference type="ChEBI" id="CHEBI:29105"/>
        <note>catalytic</note>
    </ligand>
</feature>
<feature type="binding site" evidence="2">
    <location>
        <position position="184"/>
    </location>
    <ligand>
        <name>Zn(2+)</name>
        <dbReference type="ChEBI" id="CHEBI:29105"/>
        <note>catalytic</note>
    </ligand>
</feature>
<keyword id="KW-0378">Hydrolase</keyword>
<keyword id="KW-0479">Metal-binding</keyword>
<keyword id="KW-0482">Metalloprotease</keyword>
<keyword id="KW-0645">Protease</keyword>
<keyword id="KW-0862">Zinc</keyword>